<keyword id="KW-0963">Cytoplasm</keyword>
<keyword id="KW-1185">Reference proteome</keyword>
<evidence type="ECO:0000250" key="1"/>
<evidence type="ECO:0000305" key="2"/>
<proteinExistence type="inferred from homology"/>
<sequence length="43" mass="4859">MKKKPVAQLERQHSLLENPCAYGLLSQFQAAIVVNCFTLNKII</sequence>
<dbReference type="EMBL" id="CP000038">
    <property type="protein sequence ID" value="AAZ89680.1"/>
    <property type="status" value="ALT_INIT"/>
    <property type="molecule type" value="Genomic_DNA"/>
</dbReference>
<dbReference type="RefSeq" id="WP_001297406.1">
    <property type="nucleotide sequence ID" value="NC_007384.1"/>
</dbReference>
<dbReference type="GeneID" id="93779056"/>
<dbReference type="KEGG" id="ssn:SSON_3093"/>
<dbReference type="HOGENOM" id="CLU_216465_0_0_6"/>
<dbReference type="Proteomes" id="UP000002529">
    <property type="component" value="Chromosome"/>
</dbReference>
<dbReference type="GO" id="GO:0005737">
    <property type="term" value="C:cytoplasm"/>
    <property type="evidence" value="ECO:0007669"/>
    <property type="project" value="UniProtKB-SubCell"/>
</dbReference>
<dbReference type="InterPro" id="IPR020196">
    <property type="entry name" value="Uncharacterised_YqgB"/>
</dbReference>
<dbReference type="NCBIfam" id="NF033844">
    <property type="entry name" value="small_YqgB"/>
    <property type="match status" value="1"/>
</dbReference>
<dbReference type="Pfam" id="PF11036">
    <property type="entry name" value="YqgB"/>
    <property type="match status" value="1"/>
</dbReference>
<accession>Q3YXT2</accession>
<protein>
    <recommendedName>
        <fullName>Uncharacterized protein YqgB</fullName>
    </recommendedName>
</protein>
<gene>
    <name type="primary">yqgB</name>
    <name type="ordered locus">SSON_3093</name>
</gene>
<name>YQGB_SHISS</name>
<feature type="chain" id="PRO_0000294101" description="Uncharacterized protein YqgB">
    <location>
        <begin position="1"/>
        <end position="43"/>
    </location>
</feature>
<reference key="1">
    <citation type="journal article" date="2005" name="Nucleic Acids Res.">
        <title>Genome dynamics and diversity of Shigella species, the etiologic agents of bacillary dysentery.</title>
        <authorList>
            <person name="Yang F."/>
            <person name="Yang J."/>
            <person name="Zhang X."/>
            <person name="Chen L."/>
            <person name="Jiang Y."/>
            <person name="Yan Y."/>
            <person name="Tang X."/>
            <person name="Wang J."/>
            <person name="Xiong Z."/>
            <person name="Dong J."/>
            <person name="Xue Y."/>
            <person name="Zhu Y."/>
            <person name="Xu X."/>
            <person name="Sun L."/>
            <person name="Chen S."/>
            <person name="Nie H."/>
            <person name="Peng J."/>
            <person name="Xu J."/>
            <person name="Wang Y."/>
            <person name="Yuan Z."/>
            <person name="Wen Y."/>
            <person name="Yao Z."/>
            <person name="Shen Y."/>
            <person name="Qiang B."/>
            <person name="Hou Y."/>
            <person name="Yu J."/>
            <person name="Jin Q."/>
        </authorList>
    </citation>
    <scope>NUCLEOTIDE SEQUENCE [LARGE SCALE GENOMIC DNA]</scope>
    <source>
        <strain>Ss046</strain>
    </source>
</reference>
<organism>
    <name type="scientific">Shigella sonnei (strain Ss046)</name>
    <dbReference type="NCBI Taxonomy" id="300269"/>
    <lineage>
        <taxon>Bacteria</taxon>
        <taxon>Pseudomonadati</taxon>
        <taxon>Pseudomonadota</taxon>
        <taxon>Gammaproteobacteria</taxon>
        <taxon>Enterobacterales</taxon>
        <taxon>Enterobacteriaceae</taxon>
        <taxon>Shigella</taxon>
    </lineage>
</organism>
<comment type="subcellular location">
    <subcellularLocation>
        <location evidence="1">Cytoplasm</location>
    </subcellularLocation>
</comment>
<comment type="similarity">
    <text evidence="2">Belongs to the YqgB family.</text>
</comment>
<comment type="sequence caution" evidence="2">
    <conflict type="erroneous initiation">
        <sequence resource="EMBL-CDS" id="AAZ89680"/>
    </conflict>
    <text>Extended N-terminus.</text>
</comment>